<comment type="function">
    <text evidence="1">The glycine cleavage system catalyzes the degradation of glycine. The H protein shuttles the methylamine group of glycine from the P protein to the T protein.</text>
</comment>
<comment type="cofactor">
    <cofactor evidence="1">
        <name>(R)-lipoate</name>
        <dbReference type="ChEBI" id="CHEBI:83088"/>
    </cofactor>
    <text evidence="1">Binds 1 lipoyl cofactor covalently.</text>
</comment>
<comment type="subunit">
    <text evidence="1">The glycine cleavage system is composed of four proteins: P, T, L and H.</text>
</comment>
<comment type="similarity">
    <text evidence="1">Belongs to the GcvH family.</text>
</comment>
<sequence length="130" mass="13750">MANLPSDFSYSEDHEWINATADSVVGSTVRIGITSVATDRLGEVVFAELPAVGDTVEHGETCGEVESTKSVSDLYSPVTGTVTAVNEGVHDDYAVINNDPFGEGWLFEVEVTEAGELMTADEYASANGVD</sequence>
<name>GCSH_CORA7</name>
<keyword id="KW-0450">Lipoyl</keyword>
<keyword id="KW-1185">Reference proteome</keyword>
<dbReference type="EMBL" id="CP001601">
    <property type="protein sequence ID" value="ACP33308.1"/>
    <property type="molecule type" value="Genomic_DNA"/>
</dbReference>
<dbReference type="RefSeq" id="WP_010190598.1">
    <property type="nucleotide sequence ID" value="NZ_ACLH01000089.1"/>
</dbReference>
<dbReference type="SMR" id="C3PHK4"/>
<dbReference type="STRING" id="548476.cauri_1715"/>
<dbReference type="GeneID" id="31924343"/>
<dbReference type="KEGG" id="car:cauri_1715"/>
<dbReference type="eggNOG" id="COG0509">
    <property type="taxonomic scope" value="Bacteria"/>
</dbReference>
<dbReference type="HOGENOM" id="CLU_097408_2_2_11"/>
<dbReference type="OrthoDB" id="9796712at2"/>
<dbReference type="Proteomes" id="UP000002077">
    <property type="component" value="Chromosome"/>
</dbReference>
<dbReference type="GO" id="GO:0005829">
    <property type="term" value="C:cytosol"/>
    <property type="evidence" value="ECO:0007669"/>
    <property type="project" value="TreeGrafter"/>
</dbReference>
<dbReference type="GO" id="GO:0005960">
    <property type="term" value="C:glycine cleavage complex"/>
    <property type="evidence" value="ECO:0007669"/>
    <property type="project" value="InterPro"/>
</dbReference>
<dbReference type="GO" id="GO:0019464">
    <property type="term" value="P:glycine decarboxylation via glycine cleavage system"/>
    <property type="evidence" value="ECO:0007669"/>
    <property type="project" value="UniProtKB-UniRule"/>
</dbReference>
<dbReference type="CDD" id="cd06848">
    <property type="entry name" value="GCS_H"/>
    <property type="match status" value="1"/>
</dbReference>
<dbReference type="Gene3D" id="2.40.50.100">
    <property type="match status" value="1"/>
</dbReference>
<dbReference type="HAMAP" id="MF_00272">
    <property type="entry name" value="GcvH"/>
    <property type="match status" value="1"/>
</dbReference>
<dbReference type="InterPro" id="IPR003016">
    <property type="entry name" value="2-oxoA_DH_lipoyl-BS"/>
</dbReference>
<dbReference type="InterPro" id="IPR000089">
    <property type="entry name" value="Biotin_lipoyl"/>
</dbReference>
<dbReference type="InterPro" id="IPR002930">
    <property type="entry name" value="GCV_H"/>
</dbReference>
<dbReference type="InterPro" id="IPR033753">
    <property type="entry name" value="GCV_H/Fam206"/>
</dbReference>
<dbReference type="InterPro" id="IPR017453">
    <property type="entry name" value="GCV_H_sub"/>
</dbReference>
<dbReference type="InterPro" id="IPR011053">
    <property type="entry name" value="Single_hybrid_motif"/>
</dbReference>
<dbReference type="NCBIfam" id="TIGR00527">
    <property type="entry name" value="gcvH"/>
    <property type="match status" value="1"/>
</dbReference>
<dbReference type="NCBIfam" id="NF002270">
    <property type="entry name" value="PRK01202.1"/>
    <property type="match status" value="1"/>
</dbReference>
<dbReference type="PANTHER" id="PTHR11715">
    <property type="entry name" value="GLYCINE CLEAVAGE SYSTEM H PROTEIN"/>
    <property type="match status" value="1"/>
</dbReference>
<dbReference type="PANTHER" id="PTHR11715:SF3">
    <property type="entry name" value="GLYCINE CLEAVAGE SYSTEM H PROTEIN-RELATED"/>
    <property type="match status" value="1"/>
</dbReference>
<dbReference type="Pfam" id="PF01597">
    <property type="entry name" value="GCV_H"/>
    <property type="match status" value="1"/>
</dbReference>
<dbReference type="SUPFAM" id="SSF51230">
    <property type="entry name" value="Single hybrid motif"/>
    <property type="match status" value="1"/>
</dbReference>
<dbReference type="PROSITE" id="PS50968">
    <property type="entry name" value="BIOTINYL_LIPOYL"/>
    <property type="match status" value="1"/>
</dbReference>
<dbReference type="PROSITE" id="PS00189">
    <property type="entry name" value="LIPOYL"/>
    <property type="match status" value="1"/>
</dbReference>
<evidence type="ECO:0000255" key="1">
    <source>
        <dbReference type="HAMAP-Rule" id="MF_00272"/>
    </source>
</evidence>
<evidence type="ECO:0000255" key="2">
    <source>
        <dbReference type="PROSITE-ProRule" id="PRU01066"/>
    </source>
</evidence>
<reference key="1">
    <citation type="journal article" date="2010" name="BMC Genomics">
        <title>Complete genome sequence and lifestyle of black-pigmented Corynebacterium aurimucosum ATCC 700975 (formerly C. nigricans CN-1) isolated from a vaginal swab of a woman with spontaneous abortion.</title>
        <authorList>
            <person name="Trost E."/>
            <person name="Gotker S."/>
            <person name="Schneider J."/>
            <person name="Schneiker-Bekel S."/>
            <person name="Szczepanowski R."/>
            <person name="Tilker A."/>
            <person name="Viehoever P."/>
            <person name="Arnold W."/>
            <person name="Bekel T."/>
            <person name="Blom J."/>
            <person name="Gartemann K.H."/>
            <person name="Linke B."/>
            <person name="Goesmann A."/>
            <person name="Puhler A."/>
            <person name="Shukla S.K."/>
            <person name="Tauch A."/>
        </authorList>
    </citation>
    <scope>NUCLEOTIDE SEQUENCE [LARGE SCALE GENOMIC DNA]</scope>
    <source>
        <strain>ATCC 700975 / DSM 44827 / CIP 107346 / CN-1</strain>
    </source>
</reference>
<feature type="chain" id="PRO_1000190198" description="Glycine cleavage system H protein">
    <location>
        <begin position="1"/>
        <end position="130"/>
    </location>
</feature>
<feature type="domain" description="Lipoyl-binding" evidence="2">
    <location>
        <begin position="28"/>
        <end position="110"/>
    </location>
</feature>
<feature type="modified residue" description="N6-lipoyllysine" evidence="1">
    <location>
        <position position="69"/>
    </location>
</feature>
<organism>
    <name type="scientific">Corynebacterium aurimucosum (strain ATCC 700975 / DSM 44827 / CIP 107346 / CN-1)</name>
    <name type="common">Corynebacterium nigricans</name>
    <dbReference type="NCBI Taxonomy" id="548476"/>
    <lineage>
        <taxon>Bacteria</taxon>
        <taxon>Bacillati</taxon>
        <taxon>Actinomycetota</taxon>
        <taxon>Actinomycetes</taxon>
        <taxon>Mycobacteriales</taxon>
        <taxon>Corynebacteriaceae</taxon>
        <taxon>Corynebacterium</taxon>
    </lineage>
</organism>
<proteinExistence type="inferred from homology"/>
<accession>C3PHK4</accession>
<protein>
    <recommendedName>
        <fullName evidence="1">Glycine cleavage system H protein</fullName>
    </recommendedName>
</protein>
<gene>
    <name evidence="1" type="primary">gcvH</name>
    <name type="ordered locus">cauri_1715</name>
</gene>